<gene>
    <name evidence="1" type="primary">rpmE2</name>
    <name type="ordered locus">ckrop_0483</name>
</gene>
<keyword id="KW-1185">Reference proteome</keyword>
<keyword id="KW-0687">Ribonucleoprotein</keyword>
<keyword id="KW-0689">Ribosomal protein</keyword>
<reference key="1">
    <citation type="journal article" date="2008" name="J. Biotechnol.">
        <title>Ultrafast pyrosequencing of Corynebacterium kroppenstedtii DSM44385 revealed insights into the physiology of a lipophilic corynebacterium that lacks mycolic acids.</title>
        <authorList>
            <person name="Tauch A."/>
            <person name="Schneider J."/>
            <person name="Szczepanowski R."/>
            <person name="Tilker A."/>
            <person name="Viehoever P."/>
            <person name="Gartemann K.-H."/>
            <person name="Arnold W."/>
            <person name="Blom J."/>
            <person name="Brinkrolf K."/>
            <person name="Brune I."/>
            <person name="Goetker S."/>
            <person name="Weisshaar B."/>
            <person name="Goesmann A."/>
            <person name="Droege M."/>
            <person name="Puehler A."/>
        </authorList>
    </citation>
    <scope>NUCLEOTIDE SEQUENCE [LARGE SCALE GENOMIC DNA]</scope>
    <source>
        <strain>DSM 44385 / JCM 11950 / CIP 105744 / CCUG 35717</strain>
    </source>
</reference>
<comment type="subunit">
    <text evidence="1">Part of the 50S ribosomal subunit.</text>
</comment>
<comment type="similarity">
    <text evidence="1">Belongs to the bacterial ribosomal protein bL31 family. Type B subfamily.</text>
</comment>
<feature type="chain" id="PRO_1000206530" description="Large ribosomal subunit protein bL31B">
    <location>
        <begin position="1"/>
        <end position="87"/>
    </location>
</feature>
<accession>C4LHF4</accession>
<evidence type="ECO:0000255" key="1">
    <source>
        <dbReference type="HAMAP-Rule" id="MF_00502"/>
    </source>
</evidence>
<evidence type="ECO:0000305" key="2"/>
<protein>
    <recommendedName>
        <fullName evidence="1">Large ribosomal subunit protein bL31B</fullName>
    </recommendedName>
    <alternativeName>
        <fullName evidence="2">50S ribosomal protein L31 type B</fullName>
    </alternativeName>
</protein>
<proteinExistence type="inferred from homology"/>
<sequence>MKKNIHPDYHPVVFKDASTGHQFLTRSTATSDRTVEWEDGNEYPLIVVDVTSESHPFWTGAQRVMDTAGRVEKFQRRYGNRLRRAKK</sequence>
<name>RL31B_CORK4</name>
<dbReference type="EMBL" id="CP001620">
    <property type="protein sequence ID" value="ACR17259.1"/>
    <property type="molecule type" value="Genomic_DNA"/>
</dbReference>
<dbReference type="RefSeq" id="WP_012731146.1">
    <property type="nucleotide sequence ID" value="NC_012704.1"/>
</dbReference>
<dbReference type="SMR" id="C4LHF4"/>
<dbReference type="STRING" id="645127.ckrop_0483"/>
<dbReference type="KEGG" id="ckp:ckrop_0483"/>
<dbReference type="eggNOG" id="COG0254">
    <property type="taxonomic scope" value="Bacteria"/>
</dbReference>
<dbReference type="HOGENOM" id="CLU_114306_2_1_11"/>
<dbReference type="OrthoDB" id="9803251at2"/>
<dbReference type="Proteomes" id="UP000001473">
    <property type="component" value="Chromosome"/>
</dbReference>
<dbReference type="GO" id="GO:1990904">
    <property type="term" value="C:ribonucleoprotein complex"/>
    <property type="evidence" value="ECO:0007669"/>
    <property type="project" value="UniProtKB-KW"/>
</dbReference>
<dbReference type="GO" id="GO:0005840">
    <property type="term" value="C:ribosome"/>
    <property type="evidence" value="ECO:0007669"/>
    <property type="project" value="UniProtKB-KW"/>
</dbReference>
<dbReference type="GO" id="GO:0003735">
    <property type="term" value="F:structural constituent of ribosome"/>
    <property type="evidence" value="ECO:0007669"/>
    <property type="project" value="InterPro"/>
</dbReference>
<dbReference type="GO" id="GO:0006412">
    <property type="term" value="P:translation"/>
    <property type="evidence" value="ECO:0007669"/>
    <property type="project" value="UniProtKB-UniRule"/>
</dbReference>
<dbReference type="Gene3D" id="4.10.830.30">
    <property type="entry name" value="Ribosomal protein L31"/>
    <property type="match status" value="1"/>
</dbReference>
<dbReference type="HAMAP" id="MF_00502">
    <property type="entry name" value="Ribosomal_bL31_2"/>
    <property type="match status" value="1"/>
</dbReference>
<dbReference type="InterPro" id="IPR034704">
    <property type="entry name" value="Ribosomal_bL28/bL31-like_sf"/>
</dbReference>
<dbReference type="InterPro" id="IPR002150">
    <property type="entry name" value="Ribosomal_bL31"/>
</dbReference>
<dbReference type="InterPro" id="IPR027493">
    <property type="entry name" value="Ribosomal_bL31_B"/>
</dbReference>
<dbReference type="InterPro" id="IPR042105">
    <property type="entry name" value="Ribosomal_bL31_sf"/>
</dbReference>
<dbReference type="NCBIfam" id="TIGR00105">
    <property type="entry name" value="L31"/>
    <property type="match status" value="1"/>
</dbReference>
<dbReference type="NCBIfam" id="NF001809">
    <property type="entry name" value="PRK00528.1"/>
    <property type="match status" value="1"/>
</dbReference>
<dbReference type="NCBIfam" id="NF002462">
    <property type="entry name" value="PRK01678.1"/>
    <property type="match status" value="1"/>
</dbReference>
<dbReference type="PANTHER" id="PTHR33280">
    <property type="entry name" value="50S RIBOSOMAL PROTEIN L31, CHLOROPLASTIC"/>
    <property type="match status" value="1"/>
</dbReference>
<dbReference type="PANTHER" id="PTHR33280:SF1">
    <property type="entry name" value="LARGE RIBOSOMAL SUBUNIT PROTEIN BL31C"/>
    <property type="match status" value="1"/>
</dbReference>
<dbReference type="Pfam" id="PF01197">
    <property type="entry name" value="Ribosomal_L31"/>
    <property type="match status" value="1"/>
</dbReference>
<dbReference type="PRINTS" id="PR01249">
    <property type="entry name" value="RIBOSOMALL31"/>
</dbReference>
<dbReference type="SUPFAM" id="SSF143800">
    <property type="entry name" value="L28p-like"/>
    <property type="match status" value="1"/>
</dbReference>
<dbReference type="PROSITE" id="PS01143">
    <property type="entry name" value="RIBOSOMAL_L31"/>
    <property type="match status" value="1"/>
</dbReference>
<organism>
    <name type="scientific">Corynebacterium kroppenstedtii (strain DSM 44385 / JCM 11950 / CIP 105744 / CCUG 35717)</name>
    <dbReference type="NCBI Taxonomy" id="645127"/>
    <lineage>
        <taxon>Bacteria</taxon>
        <taxon>Bacillati</taxon>
        <taxon>Actinomycetota</taxon>
        <taxon>Actinomycetes</taxon>
        <taxon>Mycobacteriales</taxon>
        <taxon>Corynebacteriaceae</taxon>
        <taxon>Corynebacterium</taxon>
    </lineage>
</organism>